<reference key="1">
    <citation type="journal article" date="1998" name="Curr. Microbiol.">
        <title>The endosymbiont (Buchnera) of the aphid Diuraphis noxia contains all the genes of the tryptophan biosynthetic pathway.</title>
        <authorList>
            <person name="Baumann L."/>
            <person name="Baumann P."/>
            <person name="Moran N.A."/>
        </authorList>
    </citation>
    <scope>NUCLEOTIDE SEQUENCE [GENOMIC DNA]</scope>
</reference>
<feature type="chain" id="PRO_0000098929" description="Tryptophan synthase beta chain">
    <location>
        <begin position="1"/>
        <end position="397"/>
    </location>
</feature>
<feature type="modified residue" description="N6-(pyridoxal phosphate)lysine" evidence="1">
    <location>
        <position position="86"/>
    </location>
</feature>
<evidence type="ECO:0000250" key="1"/>
<evidence type="ECO:0000305" key="2"/>
<comment type="function">
    <text evidence="1">The beta subunit is responsible for the synthesis of L-tryptophan from indole and L-serine.</text>
</comment>
<comment type="catalytic activity">
    <reaction>
        <text>(1S,2R)-1-C-(indol-3-yl)glycerol 3-phosphate + L-serine = D-glyceraldehyde 3-phosphate + L-tryptophan + H2O</text>
        <dbReference type="Rhea" id="RHEA:10532"/>
        <dbReference type="ChEBI" id="CHEBI:15377"/>
        <dbReference type="ChEBI" id="CHEBI:33384"/>
        <dbReference type="ChEBI" id="CHEBI:57912"/>
        <dbReference type="ChEBI" id="CHEBI:58866"/>
        <dbReference type="ChEBI" id="CHEBI:59776"/>
        <dbReference type="EC" id="4.2.1.20"/>
    </reaction>
</comment>
<comment type="cofactor">
    <cofactor evidence="1">
        <name>pyridoxal 5'-phosphate</name>
        <dbReference type="ChEBI" id="CHEBI:597326"/>
    </cofactor>
</comment>
<comment type="pathway">
    <text>Amino-acid biosynthesis; L-tryptophan biosynthesis; L-tryptophan from chorismate: step 5/5.</text>
</comment>
<comment type="subunit">
    <text evidence="1">Tetramer of two alpha and two beta chains.</text>
</comment>
<comment type="similarity">
    <text evidence="2">Belongs to the TrpB family.</text>
</comment>
<protein>
    <recommendedName>
        <fullName>Tryptophan synthase beta chain</fullName>
        <ecNumber>4.2.1.20</ecNumber>
    </recommendedName>
</protein>
<accession>O68428</accession>
<proteinExistence type="inferred from homology"/>
<organism>
    <name type="scientific">Buchnera aphidicola subsp. Diuraphis noxia</name>
    <dbReference type="NCBI Taxonomy" id="118101"/>
    <lineage>
        <taxon>Bacteria</taxon>
        <taxon>Pseudomonadati</taxon>
        <taxon>Pseudomonadota</taxon>
        <taxon>Gammaproteobacteria</taxon>
        <taxon>Enterobacterales</taxon>
        <taxon>Erwiniaceae</taxon>
        <taxon>Buchnera</taxon>
    </lineage>
</organism>
<gene>
    <name type="primary">trpB</name>
</gene>
<keyword id="KW-0028">Amino-acid biosynthesis</keyword>
<keyword id="KW-0057">Aromatic amino acid biosynthesis</keyword>
<keyword id="KW-0456">Lyase</keyword>
<keyword id="KW-0663">Pyridoxal phosphate</keyword>
<keyword id="KW-0822">Tryptophan biosynthesis</keyword>
<name>TRPB_BUCDN</name>
<dbReference type="EC" id="4.2.1.20"/>
<dbReference type="EMBL" id="AF038565">
    <property type="protein sequence ID" value="AAC27735.1"/>
    <property type="molecule type" value="Genomic_DNA"/>
</dbReference>
<dbReference type="SMR" id="O68428"/>
<dbReference type="STRING" id="118101.ATN01_01380"/>
<dbReference type="UniPathway" id="UPA00035">
    <property type="reaction ID" value="UER00044"/>
</dbReference>
<dbReference type="GO" id="GO:0005737">
    <property type="term" value="C:cytoplasm"/>
    <property type="evidence" value="ECO:0007669"/>
    <property type="project" value="TreeGrafter"/>
</dbReference>
<dbReference type="GO" id="GO:0004834">
    <property type="term" value="F:tryptophan synthase activity"/>
    <property type="evidence" value="ECO:0007669"/>
    <property type="project" value="UniProtKB-UniRule"/>
</dbReference>
<dbReference type="CDD" id="cd06446">
    <property type="entry name" value="Trp-synth_B"/>
    <property type="match status" value="1"/>
</dbReference>
<dbReference type="FunFam" id="3.40.50.1100:FF:000001">
    <property type="entry name" value="Tryptophan synthase beta chain"/>
    <property type="match status" value="1"/>
</dbReference>
<dbReference type="FunFam" id="3.40.50.1100:FF:000004">
    <property type="entry name" value="Tryptophan synthase beta chain"/>
    <property type="match status" value="1"/>
</dbReference>
<dbReference type="Gene3D" id="3.40.50.1100">
    <property type="match status" value="2"/>
</dbReference>
<dbReference type="HAMAP" id="MF_00133">
    <property type="entry name" value="Trp_synth_beta"/>
    <property type="match status" value="1"/>
</dbReference>
<dbReference type="InterPro" id="IPR006653">
    <property type="entry name" value="Trp_synth_b_CS"/>
</dbReference>
<dbReference type="InterPro" id="IPR006654">
    <property type="entry name" value="Trp_synth_beta"/>
</dbReference>
<dbReference type="InterPro" id="IPR023026">
    <property type="entry name" value="Trp_synth_beta/beta-like"/>
</dbReference>
<dbReference type="InterPro" id="IPR001926">
    <property type="entry name" value="TrpB-like_PALP"/>
</dbReference>
<dbReference type="InterPro" id="IPR036052">
    <property type="entry name" value="TrpB-like_PALP_sf"/>
</dbReference>
<dbReference type="NCBIfam" id="TIGR00263">
    <property type="entry name" value="trpB"/>
    <property type="match status" value="1"/>
</dbReference>
<dbReference type="PANTHER" id="PTHR48077:SF3">
    <property type="entry name" value="TRYPTOPHAN SYNTHASE"/>
    <property type="match status" value="1"/>
</dbReference>
<dbReference type="PANTHER" id="PTHR48077">
    <property type="entry name" value="TRYPTOPHAN SYNTHASE-RELATED"/>
    <property type="match status" value="1"/>
</dbReference>
<dbReference type="Pfam" id="PF00291">
    <property type="entry name" value="PALP"/>
    <property type="match status" value="1"/>
</dbReference>
<dbReference type="PIRSF" id="PIRSF001413">
    <property type="entry name" value="Trp_syn_beta"/>
    <property type="match status" value="1"/>
</dbReference>
<dbReference type="SUPFAM" id="SSF53686">
    <property type="entry name" value="Tryptophan synthase beta subunit-like PLP-dependent enzymes"/>
    <property type="match status" value="1"/>
</dbReference>
<dbReference type="PROSITE" id="PS00168">
    <property type="entry name" value="TRP_SYNTHASE_BETA"/>
    <property type="match status" value="1"/>
</dbReference>
<sequence length="397" mass="43851">MTLLNPYFGKFGGMYVPQILMPALLELEKNFVEAQKDINFHKTFFNLLKNYAGRPTPLTLCNNLTKGTKTRIYLKREDLLHGGAHKTNQVLGQAILAIRMKKNEIIAETGAGQHGVATAIACALLNLKCRIYMGIKDIKRQHPNVFRMKLMGAEVIPVKNGSGTLKDACNEALRDWSNSYKNSHYMIGTAAGPHPYPTIVREFQKIIGEETKQQILEQETKLPNAIIACVGGGSNAIGIFSNFINDKEVSLIGVEPGGKGIKTGQHGAPLKHGRTGIFFGMKSHLMQDQEGQIQESWSISAGLDFPSVGPEHAWLNSINRAQYVSITDQEALDTFQLLCKKEGIIPALESSHALAYALKLMNLSPKKEQIFVVNLSGRGDKDIFTVHDILKKTGKRI</sequence>